<name>EIF3A_RAT</name>
<comment type="function">
    <text evidence="2">RNA-binding component of the eukaryotic translation initiation factor 3 (eIF-3) complex, which is required for several steps in the initiation of protein synthesis. The eIF-3 complex associates with the 40S ribosome and facilitates the recruitment of eIF-1, eIF-1A, eIF-2:GTP:methionyl-tRNAi and eIF-5 to form the 43S pre-initiation complex (43S PIC). The eIF-3 complex stimulates mRNA recruitment to the 43S PIC and scanning of the mRNA for AUG recognition. The eIF-3 complex is also required for disassembly and recycling of post-termination ribosomal complexes and subsequently prevents premature joining of the 40S and 60S ribosomal subunits prior to initiation. The eIF-3 complex specifically targets and initiates translation of a subset of mRNAs involved in cell proliferation, including cell cycling, differentiation and apoptosis, and uses different modes of RNA stem-loop binding to exert either translational activation or repression.</text>
</comment>
<comment type="subunit">
    <text evidence="2">Component of the eukaryotic translation initiation factor 3 (eIF-3) complex, which is composed of 13 subunits: EIF3A, EIF3B, EIF3C, EIF3D, EIF3E, EIF3F, EIF3G, EIF3H, EIF3I, EIF3J, EIF3K, EIF3L and EIF3M. The eIF-3 complex appears to include 3 stable modules: module A is composed of EIF3A, EIF3B, EIF3G and EIF3I; module B is composed of EIF3F, EIF3H, and EIF3M; and module C is composed of EIF3C, EIF3D, EIF3E, EIF3L and EIF3K. EIF3C of module C binds EIF3B of module A and EIF3H of module B, thereby linking the three modules. EIF3J is a labile subunit that binds to the eIF-3 complex via EIF3B. The eIF-3 complex interacts with RPS6KB1 under conditions of nutrient depletion. Mitogenic stimulation leads to binding and activation of a complex composed of MTOR and RPTOR, leading to phosphorylation and release of RPS6KB1 and binding of EIF4B to eIF-3. Interacts with EIF4G1. Also interacts with KRT7 and PIWIL2.</text>
</comment>
<comment type="subcellular location">
    <subcellularLocation>
        <location evidence="2">Cytoplasm</location>
    </subcellularLocation>
</comment>
<comment type="PTM">
    <text evidence="2">Phosphorylated. Phosphorylation is enhanced upon serum stimulation.</text>
</comment>
<comment type="similarity">
    <text evidence="2">Belongs to the eIF-3 subunit A family.</text>
</comment>
<comment type="sequence caution" evidence="5">
    <conflict type="erroneous initiation">
        <sequence resource="EMBL-CDS" id="BAE94261"/>
    </conflict>
</comment>
<sequence>MPAYFQRPENALKRANEFLEVGKKQPALDVLYDVMKSKKHRTWQKIHEPIMLKYLELCVDLRKSHLAKEGLYQYKNICQQVNIKSLEDVVRAYLKLAEEKTEAAKEESQQMVLDIEDLDNIQTPESVLLSAVSGEDTQDRTDRLLLTPWVKFLWESYRQCLDLLRNNSRVERLYHDIAQQAFKFCLQYTRKAEFRKLCDNLRMHLSQIQRHHNQSTAINLNNPESQSMHLETRLVQLDSAISMELWQEAFKAVEDIHGLFSLSKKPPKPQLMANYYNKVSTVFWKSGNALFHASTLHRLYHLSREMRKNLTQDEMQRMSTRVLLATLSIPITPERTDIARLLDMDGIIVEKQRRLATLLGLQAPPTRIGLINDMVRFNVLQYVVPEVKDLYNWLEVEFNPLKLCERVTKVLNWVREQPEKEPELQQYVPQLQNNTILRLLQQVAQIYQSIEFSRLTSLVPFVDAFQLERAIVDAARHCDLQVRIDHTSRTLSFGSDLNYATREDAPIGPHLQSMPSEQIRNQLTAMSSVLAKALEVIKPAHILQEKEEQHQLAVTAYIKNSRKEHQRILARRQTIEERKERLESLNIQREKEELEQREAELQKVRKAEEERLRQEAKEREKERILQEHEQIKKKTVRERLEQIKKTELGAKAFKDIDIEDLEELDPDFIMAKQVEQLEKEKKELQERLKNQEKKIDYFERAKRLEEIPLIKSAYEEQRVKDMDLWEQQEEERITTMQLEREKALEHKNRMSRMLEDRDLFVMRLKAARQSVYEEKLKQFEERLAEERHNRLEERKRQRKEERKITYYREKEEEEQRRAEEQMLKEREERERAERAKREEELREYQERVKKLEEVERKKRQRELEIEERERRREEERRLGEDPLSRKDSRWGDRDSEGTWRKGPEADSEWRRGPPEKEWRRETRDDERPHRRDEDRLRRLGGDDEERESSLRPDDDRIPRRGLDDDRGPRRGPDEDRFSRRGTDDDRPSWRNADDDRPPRRIGDDDRGSWRHTDDDRPPRRGLDDDRPPRRGLDDERGSWRTAEEDRGPRRGMDDDRGPRRGGADDERSSWRNADDDRGPRRGMDDDRGPRRGLDDDRGPWRNAAEDRISRRGADDDRGPWRNMDDDRVPRRGDDARPGPWRPFVKPGGWREKEKAREESWGPPRESRPPEEREWDRDKEKDRDNQDREENDKDLERDRDRERDGDREDRFRRPRDEGGWRRGPAEESSSWRDSSRRDDRDRDDRRRDRDDRRDLRDLRDRRDLRDDRDRRGPPLRSEREEASSWRRTDDRKDDRTEERDPPRRVPPPTLSRERERERDREGEKEKASWRAEKDRESLRRTKNETDEDGWTTVRR</sequence>
<keyword id="KW-0007">Acetylation</keyword>
<keyword id="KW-0175">Coiled coil</keyword>
<keyword id="KW-0963">Cytoplasm</keyword>
<keyword id="KW-0396">Initiation factor</keyword>
<keyword id="KW-0597">Phosphoprotein</keyword>
<keyword id="KW-0648">Protein biosynthesis</keyword>
<keyword id="KW-1185">Reference proteome</keyword>
<keyword id="KW-0677">Repeat</keyword>
<keyword id="KW-0694">RNA-binding</keyword>
<organism>
    <name type="scientific">Rattus norvegicus</name>
    <name type="common">Rat</name>
    <dbReference type="NCBI Taxonomy" id="10116"/>
    <lineage>
        <taxon>Eukaryota</taxon>
        <taxon>Metazoa</taxon>
        <taxon>Chordata</taxon>
        <taxon>Craniata</taxon>
        <taxon>Vertebrata</taxon>
        <taxon>Euteleostomi</taxon>
        <taxon>Mammalia</taxon>
        <taxon>Eutheria</taxon>
        <taxon>Euarchontoglires</taxon>
        <taxon>Glires</taxon>
        <taxon>Rodentia</taxon>
        <taxon>Myomorpha</taxon>
        <taxon>Muroidea</taxon>
        <taxon>Muridae</taxon>
        <taxon>Murinae</taxon>
        <taxon>Rattus</taxon>
    </lineage>
</organism>
<proteinExistence type="evidence at transcript level"/>
<reference key="1">
    <citation type="submission" date="2003-04" db="EMBL/GenBank/DDBJ databases">
        <title>Amgen rat EST program.</title>
        <authorList>
            <consortium name="Amgen EST program"/>
        </authorList>
    </citation>
    <scope>NUCLEOTIDE SEQUENCE [LARGE SCALE MRNA] OF 1-155</scope>
    <source>
        <tissue>Spinal ganglion</tissue>
    </source>
</reference>
<reference key="2">
    <citation type="submission" date="2006-04" db="EMBL/GenBank/DDBJ databases">
        <title>Further study on the effects of different TCM treatments on liver cancer. Constructing a rat liver cDNA library and screening and analyzing of some differently expressed genes.</title>
        <authorList>
            <person name="Zhang H."/>
            <person name="Fang Z."/>
            <person name="Guan D."/>
            <person name="Wu Z."/>
            <person name="Zhu X."/>
            <person name="Pan Z."/>
            <person name="Liang C."/>
        </authorList>
    </citation>
    <scope>NUCLEOTIDE SEQUENCE [MRNA] OF 56-1354</scope>
    <source>
        <strain>Wistar</strain>
    </source>
</reference>
<feature type="chain" id="PRO_0000366327" description="Eukaryotic translation initiation factor 3 subunit A">
    <location>
        <begin position="1"/>
        <end position="1354"/>
    </location>
</feature>
<feature type="domain" description="PCI" evidence="3">
    <location>
        <begin position="315"/>
        <end position="498"/>
    </location>
</feature>
<feature type="repeat" description="1; truncated">
    <location>
        <begin position="924"/>
        <end position="931"/>
    </location>
</feature>
<feature type="repeat" description="2">
    <location>
        <begin position="932"/>
        <end position="941"/>
    </location>
</feature>
<feature type="repeat" description="3; approximate">
    <location>
        <begin position="942"/>
        <end position="951"/>
    </location>
</feature>
<feature type="repeat" description="4">
    <location>
        <begin position="953"/>
        <end position="962"/>
    </location>
</feature>
<feature type="repeat" description="5">
    <location>
        <begin position="963"/>
        <end position="972"/>
    </location>
</feature>
<feature type="repeat" description="6">
    <location>
        <begin position="973"/>
        <end position="982"/>
    </location>
</feature>
<feature type="repeat" description="7">
    <location>
        <begin position="983"/>
        <end position="992"/>
    </location>
</feature>
<feature type="repeat" description="8">
    <location>
        <begin position="993"/>
        <end position="1002"/>
    </location>
</feature>
<feature type="repeat" description="9">
    <location>
        <begin position="1003"/>
        <end position="1012"/>
    </location>
</feature>
<feature type="repeat" description="10">
    <location>
        <begin position="1013"/>
        <end position="1022"/>
    </location>
</feature>
<feature type="repeat" description="11">
    <location>
        <begin position="1023"/>
        <end position="1032"/>
    </location>
</feature>
<feature type="repeat" description="12">
    <location>
        <begin position="1033"/>
        <end position="1042"/>
    </location>
</feature>
<feature type="repeat" description="13">
    <location>
        <begin position="1043"/>
        <end position="1052"/>
    </location>
</feature>
<feature type="repeat" description="14">
    <location>
        <begin position="1053"/>
        <end position="1062"/>
    </location>
</feature>
<feature type="repeat" description="15">
    <location>
        <begin position="1064"/>
        <end position="1073"/>
    </location>
</feature>
<feature type="repeat" description="16">
    <location>
        <begin position="1074"/>
        <end position="1083"/>
    </location>
</feature>
<feature type="repeat" description="17">
    <location>
        <begin position="1084"/>
        <end position="1093"/>
    </location>
</feature>
<feature type="repeat" description="18">
    <location>
        <begin position="1094"/>
        <end position="1103"/>
    </location>
</feature>
<feature type="repeat" description="19">
    <location>
        <begin position="1104"/>
        <end position="1113"/>
    </location>
</feature>
<feature type="repeat" description="20">
    <location>
        <begin position="1114"/>
        <end position="1123"/>
    </location>
</feature>
<feature type="repeat" description="21">
    <location>
        <begin position="1124"/>
        <end position="1133"/>
    </location>
</feature>
<feature type="repeat" description="22; approximate">
    <location>
        <begin position="1134"/>
        <end position="1143"/>
    </location>
</feature>
<feature type="region of interest" description="Interaction with EIF3B" evidence="2">
    <location>
        <begin position="664"/>
        <end position="835"/>
    </location>
</feature>
<feature type="region of interest" description="Disordered" evidence="4">
    <location>
        <begin position="809"/>
        <end position="844"/>
    </location>
</feature>
<feature type="region of interest" description="Disordered" evidence="4">
    <location>
        <begin position="866"/>
        <end position="1249"/>
    </location>
</feature>
<feature type="region of interest" description="22 X 10 AA approximate tandem repeats of [DA]-[DE]-[ED]-R-[PLIGFSV]-[RPS]-[RW]-[RL]-[GNIHT]-[DGLPTAM]">
    <location>
        <begin position="924"/>
        <end position="1143"/>
    </location>
</feature>
<feature type="region of interest" description="Disordered" evidence="4">
    <location>
        <begin position="1262"/>
        <end position="1354"/>
    </location>
</feature>
<feature type="coiled-coil region" evidence="2">
    <location>
        <begin position="82"/>
        <end position="120"/>
    </location>
</feature>
<feature type="compositionally biased region" description="Basic and acidic residues" evidence="4">
    <location>
        <begin position="866"/>
        <end position="1136"/>
    </location>
</feature>
<feature type="compositionally biased region" description="Basic and acidic residues" evidence="4">
    <location>
        <begin position="1148"/>
        <end position="1249"/>
    </location>
</feature>
<feature type="compositionally biased region" description="Basic and acidic residues" evidence="4">
    <location>
        <begin position="1262"/>
        <end position="1302"/>
    </location>
</feature>
<feature type="compositionally biased region" description="Basic and acidic residues" evidence="4">
    <location>
        <begin position="1310"/>
        <end position="1343"/>
    </location>
</feature>
<feature type="modified residue" description="N6-acetyllysine" evidence="1">
    <location>
        <position position="68"/>
    </location>
</feature>
<feature type="modified residue" description="Phosphoserine" evidence="1 2">
    <location>
        <position position="492"/>
    </location>
</feature>
<feature type="modified residue" description="Phosphoserine" evidence="1">
    <location>
        <position position="584"/>
    </location>
</feature>
<feature type="modified residue" description="Phosphoserine" evidence="1">
    <location>
        <position position="895"/>
    </location>
</feature>
<feature type="modified residue" description="Phosphoserine" evidence="1">
    <location>
        <position position="949"/>
    </location>
</feature>
<feature type="modified residue" description="Phosphoserine" evidence="1">
    <location>
        <position position="1038"/>
    </location>
</feature>
<feature type="modified residue" description="Phosphoserine" evidence="1">
    <location>
        <position position="1159"/>
    </location>
</feature>
<feature type="modified residue" description="Phosphoserine" evidence="1">
    <location>
        <position position="1233"/>
    </location>
</feature>
<feature type="modified residue" description="Phosphoserine" evidence="1 2">
    <location>
        <position position="1310"/>
    </location>
</feature>
<feature type="modified residue" description="Phosphoserine" evidence="1 2">
    <location>
        <position position="1336"/>
    </location>
</feature>
<dbReference type="EMBL" id="CB586480">
    <property type="status" value="NOT_ANNOTATED_CDS"/>
    <property type="molecule type" value="mRNA"/>
</dbReference>
<dbReference type="EMBL" id="AB259154">
    <property type="protein sequence ID" value="BAE94261.1"/>
    <property type="status" value="ALT_INIT"/>
    <property type="molecule type" value="mRNA"/>
</dbReference>
<dbReference type="RefSeq" id="NP_001040552.2">
    <property type="nucleotide sequence ID" value="NM_001047087.2"/>
</dbReference>
<dbReference type="SMR" id="Q1JU68"/>
<dbReference type="BioGRID" id="253779">
    <property type="interactions" value="3"/>
</dbReference>
<dbReference type="FunCoup" id="Q1JU68">
    <property type="interactions" value="4623"/>
</dbReference>
<dbReference type="IntAct" id="Q1JU68">
    <property type="interactions" value="6"/>
</dbReference>
<dbReference type="MINT" id="Q1JU68"/>
<dbReference type="STRING" id="10116.ENSRNOP00000063484"/>
<dbReference type="CarbonylDB" id="Q1JU68"/>
<dbReference type="iPTMnet" id="Q1JU68"/>
<dbReference type="PhosphoSitePlus" id="Q1JU68"/>
<dbReference type="jPOST" id="Q1JU68"/>
<dbReference type="PaxDb" id="10116-ENSRNOP00000063484"/>
<dbReference type="Ensembl" id="ENSRNOT00000066947.4">
    <property type="protein sequence ID" value="ENSRNOP00000063484.1"/>
    <property type="gene ID" value="ENSRNOG00000010117.8"/>
</dbReference>
<dbReference type="GeneID" id="292148"/>
<dbReference type="KEGG" id="rno:292148"/>
<dbReference type="AGR" id="RGD:1307269"/>
<dbReference type="CTD" id="8661"/>
<dbReference type="RGD" id="1307269">
    <property type="gene designation" value="Eif3a"/>
</dbReference>
<dbReference type="eggNOG" id="KOG2072">
    <property type="taxonomic scope" value="Eukaryota"/>
</dbReference>
<dbReference type="GeneTree" id="ENSGT00730000111063"/>
<dbReference type="HOGENOM" id="CLU_002096_1_1_1"/>
<dbReference type="InParanoid" id="Q1JU68"/>
<dbReference type="OMA" id="EHITNKR"/>
<dbReference type="OrthoDB" id="18884at2759"/>
<dbReference type="PhylomeDB" id="Q1JU68"/>
<dbReference type="TreeFam" id="TF101522"/>
<dbReference type="Reactome" id="R-RNO-156827">
    <property type="pathway name" value="L13a-mediated translational silencing of Ceruloplasmin expression"/>
</dbReference>
<dbReference type="Reactome" id="R-RNO-72649">
    <property type="pathway name" value="Translation initiation complex formation"/>
</dbReference>
<dbReference type="Reactome" id="R-RNO-72689">
    <property type="pathway name" value="Formation of a pool of free 40S subunits"/>
</dbReference>
<dbReference type="Reactome" id="R-RNO-72695">
    <property type="pathway name" value="Formation of the ternary complex, and subsequently, the 43S complex"/>
</dbReference>
<dbReference type="Reactome" id="R-RNO-72702">
    <property type="pathway name" value="Ribosomal scanning and start codon recognition"/>
</dbReference>
<dbReference type="PRO" id="PR:Q1JU68"/>
<dbReference type="Proteomes" id="UP000002494">
    <property type="component" value="Chromosome 1"/>
</dbReference>
<dbReference type="Bgee" id="ENSRNOG00000010117">
    <property type="expression patterns" value="Expressed in spleen and 19 other cell types or tissues"/>
</dbReference>
<dbReference type="GO" id="GO:0005829">
    <property type="term" value="C:cytosol"/>
    <property type="evidence" value="ECO:0007669"/>
    <property type="project" value="Ensembl"/>
</dbReference>
<dbReference type="GO" id="GO:0016282">
    <property type="term" value="C:eukaryotic 43S preinitiation complex"/>
    <property type="evidence" value="ECO:0007669"/>
    <property type="project" value="UniProtKB-UniRule"/>
</dbReference>
<dbReference type="GO" id="GO:0033290">
    <property type="term" value="C:eukaryotic 48S preinitiation complex"/>
    <property type="evidence" value="ECO:0007669"/>
    <property type="project" value="UniProtKB-UniRule"/>
</dbReference>
<dbReference type="GO" id="GO:0005852">
    <property type="term" value="C:eukaryotic translation initiation factor 3 complex"/>
    <property type="evidence" value="ECO:0000250"/>
    <property type="project" value="UniProtKB"/>
</dbReference>
<dbReference type="GO" id="GO:0071540">
    <property type="term" value="C:eukaryotic translation initiation factor 3 complex, eIF3e"/>
    <property type="evidence" value="ECO:0000318"/>
    <property type="project" value="GO_Central"/>
</dbReference>
<dbReference type="GO" id="GO:0071541">
    <property type="term" value="C:eukaryotic translation initiation factor 3 complex, eIF3m"/>
    <property type="evidence" value="ECO:0000266"/>
    <property type="project" value="RGD"/>
</dbReference>
<dbReference type="GO" id="GO:0005874">
    <property type="term" value="C:microtubule"/>
    <property type="evidence" value="ECO:0000314"/>
    <property type="project" value="RGD"/>
</dbReference>
<dbReference type="GO" id="GO:0043614">
    <property type="term" value="C:multi-eIF complex"/>
    <property type="evidence" value="ECO:0000318"/>
    <property type="project" value="GO_Central"/>
</dbReference>
<dbReference type="GO" id="GO:0005730">
    <property type="term" value="C:nucleolus"/>
    <property type="evidence" value="ECO:0007669"/>
    <property type="project" value="Ensembl"/>
</dbReference>
<dbReference type="GO" id="GO:0005654">
    <property type="term" value="C:nucleoplasm"/>
    <property type="evidence" value="ECO:0007669"/>
    <property type="project" value="Ensembl"/>
</dbReference>
<dbReference type="GO" id="GO:0014069">
    <property type="term" value="C:postsynaptic density"/>
    <property type="evidence" value="ECO:0000266"/>
    <property type="project" value="RGD"/>
</dbReference>
<dbReference type="GO" id="GO:0003729">
    <property type="term" value="F:mRNA binding"/>
    <property type="evidence" value="ECO:0000318"/>
    <property type="project" value="GO_Central"/>
</dbReference>
<dbReference type="GO" id="GO:0030971">
    <property type="term" value="F:receptor tyrosine kinase binding"/>
    <property type="evidence" value="ECO:0000353"/>
    <property type="project" value="RGD"/>
</dbReference>
<dbReference type="GO" id="GO:0003723">
    <property type="term" value="F:RNA binding"/>
    <property type="evidence" value="ECO:0000266"/>
    <property type="project" value="RGD"/>
</dbReference>
<dbReference type="GO" id="GO:0003743">
    <property type="term" value="F:translation initiation factor activity"/>
    <property type="evidence" value="ECO:0007669"/>
    <property type="project" value="UniProtKB-UniRule"/>
</dbReference>
<dbReference type="GO" id="GO:0001732">
    <property type="term" value="P:formation of cytoplasmic translation initiation complex"/>
    <property type="evidence" value="ECO:0000250"/>
    <property type="project" value="UniProtKB"/>
</dbReference>
<dbReference type="GO" id="GO:0075522">
    <property type="term" value="P:IRES-dependent viral translational initiation"/>
    <property type="evidence" value="ECO:0000266"/>
    <property type="project" value="RGD"/>
</dbReference>
<dbReference type="GO" id="GO:0070373">
    <property type="term" value="P:negative regulation of ERK1 and ERK2 cascade"/>
    <property type="evidence" value="ECO:0000315"/>
    <property type="project" value="RGD"/>
</dbReference>
<dbReference type="GO" id="GO:0002188">
    <property type="term" value="P:translation reinitiation"/>
    <property type="evidence" value="ECO:0000318"/>
    <property type="project" value="GO_Central"/>
</dbReference>
<dbReference type="GO" id="GO:0075525">
    <property type="term" value="P:viral translational termination-reinitiation"/>
    <property type="evidence" value="ECO:0000266"/>
    <property type="project" value="RGD"/>
</dbReference>
<dbReference type="FunFam" id="1.25.40.860:FF:000001">
    <property type="entry name" value="Eukaryotic translation initiation factor 3 subunit A"/>
    <property type="match status" value="1"/>
</dbReference>
<dbReference type="FunFam" id="1.25.40.860:FF:000002">
    <property type="entry name" value="Eukaryotic translation initiation factor 3 subunit A"/>
    <property type="match status" value="1"/>
</dbReference>
<dbReference type="FunFam" id="4.10.860.10:FF:000001">
    <property type="entry name" value="Eukaryotic translation initiation factor 3 subunit A"/>
    <property type="match status" value="1"/>
</dbReference>
<dbReference type="Gene3D" id="1.25.40.860">
    <property type="match status" value="2"/>
</dbReference>
<dbReference type="Gene3D" id="4.10.860.10">
    <property type="entry name" value="UVR domain"/>
    <property type="match status" value="1"/>
</dbReference>
<dbReference type="HAMAP" id="MF_03000">
    <property type="entry name" value="eIF3a"/>
    <property type="match status" value="1"/>
</dbReference>
<dbReference type="InterPro" id="IPR027512">
    <property type="entry name" value="EIF3A"/>
</dbReference>
<dbReference type="InterPro" id="IPR054711">
    <property type="entry name" value="eIF3a_PCI_TPR-like"/>
</dbReference>
<dbReference type="InterPro" id="IPR000717">
    <property type="entry name" value="PCI_dom"/>
</dbReference>
<dbReference type="PANTHER" id="PTHR14005:SF0">
    <property type="entry name" value="EUKARYOTIC TRANSLATION INITIATION FACTOR 3 SUBUNIT A"/>
    <property type="match status" value="1"/>
</dbReference>
<dbReference type="PANTHER" id="PTHR14005">
    <property type="entry name" value="EUKARYOTIC TRANSLATION INITIATION FACTOR 3, THETA SUBUNIT"/>
    <property type="match status" value="1"/>
</dbReference>
<dbReference type="Pfam" id="PF22591">
    <property type="entry name" value="eIF3a_PCI_TPR-like"/>
    <property type="match status" value="1"/>
</dbReference>
<dbReference type="Pfam" id="PF01399">
    <property type="entry name" value="PCI"/>
    <property type="match status" value="1"/>
</dbReference>
<dbReference type="SMART" id="SM00088">
    <property type="entry name" value="PINT"/>
    <property type="match status" value="1"/>
</dbReference>
<dbReference type="PROSITE" id="PS50250">
    <property type="entry name" value="PCI"/>
    <property type="match status" value="1"/>
</dbReference>
<accession>Q1JU68</accession>
<evidence type="ECO:0000250" key="1">
    <source>
        <dbReference type="UniProtKB" id="Q14152"/>
    </source>
</evidence>
<evidence type="ECO:0000255" key="2">
    <source>
        <dbReference type="HAMAP-Rule" id="MF_03000"/>
    </source>
</evidence>
<evidence type="ECO:0000255" key="3">
    <source>
        <dbReference type="PROSITE-ProRule" id="PRU01185"/>
    </source>
</evidence>
<evidence type="ECO:0000256" key="4">
    <source>
        <dbReference type="SAM" id="MobiDB-lite"/>
    </source>
</evidence>
<evidence type="ECO:0000305" key="5"/>
<protein>
    <recommendedName>
        <fullName evidence="2">Eukaryotic translation initiation factor 3 subunit A</fullName>
        <shortName evidence="2">eIF3a</shortName>
    </recommendedName>
    <alternativeName>
        <fullName evidence="2">Eukaryotic translation initiation factor 3 subunit 10</fullName>
    </alternativeName>
    <alternativeName>
        <fullName evidence="2">eIF-3-theta</fullName>
    </alternativeName>
</protein>
<gene>
    <name type="primary">Eif3a</name>
    <name type="synonym">Eif3s10</name>
</gene>